<dbReference type="EC" id="2.5.1.75" evidence="1"/>
<dbReference type="EMBL" id="CP000612">
    <property type="protein sequence ID" value="ABO50404.1"/>
    <property type="molecule type" value="Genomic_DNA"/>
</dbReference>
<dbReference type="SMR" id="A4J5Q1"/>
<dbReference type="STRING" id="349161.Dred_1882"/>
<dbReference type="KEGG" id="drm:Dred_1882"/>
<dbReference type="eggNOG" id="COG0324">
    <property type="taxonomic scope" value="Bacteria"/>
</dbReference>
<dbReference type="HOGENOM" id="CLU_032616_0_1_9"/>
<dbReference type="Proteomes" id="UP000001556">
    <property type="component" value="Chromosome"/>
</dbReference>
<dbReference type="GO" id="GO:0005524">
    <property type="term" value="F:ATP binding"/>
    <property type="evidence" value="ECO:0007669"/>
    <property type="project" value="UniProtKB-UniRule"/>
</dbReference>
<dbReference type="GO" id="GO:0052381">
    <property type="term" value="F:tRNA dimethylallyltransferase activity"/>
    <property type="evidence" value="ECO:0007669"/>
    <property type="project" value="UniProtKB-UniRule"/>
</dbReference>
<dbReference type="GO" id="GO:0006400">
    <property type="term" value="P:tRNA modification"/>
    <property type="evidence" value="ECO:0007669"/>
    <property type="project" value="TreeGrafter"/>
</dbReference>
<dbReference type="FunFam" id="1.10.20.140:FF:000001">
    <property type="entry name" value="tRNA dimethylallyltransferase"/>
    <property type="match status" value="1"/>
</dbReference>
<dbReference type="Gene3D" id="1.10.20.140">
    <property type="match status" value="1"/>
</dbReference>
<dbReference type="Gene3D" id="3.40.50.300">
    <property type="entry name" value="P-loop containing nucleotide triphosphate hydrolases"/>
    <property type="match status" value="1"/>
</dbReference>
<dbReference type="HAMAP" id="MF_00185">
    <property type="entry name" value="IPP_trans"/>
    <property type="match status" value="1"/>
</dbReference>
<dbReference type="InterPro" id="IPR039657">
    <property type="entry name" value="Dimethylallyltransferase"/>
</dbReference>
<dbReference type="InterPro" id="IPR018022">
    <property type="entry name" value="IPT"/>
</dbReference>
<dbReference type="InterPro" id="IPR027417">
    <property type="entry name" value="P-loop_NTPase"/>
</dbReference>
<dbReference type="NCBIfam" id="TIGR00174">
    <property type="entry name" value="miaA"/>
    <property type="match status" value="1"/>
</dbReference>
<dbReference type="PANTHER" id="PTHR11088">
    <property type="entry name" value="TRNA DIMETHYLALLYLTRANSFERASE"/>
    <property type="match status" value="1"/>
</dbReference>
<dbReference type="PANTHER" id="PTHR11088:SF60">
    <property type="entry name" value="TRNA DIMETHYLALLYLTRANSFERASE"/>
    <property type="match status" value="1"/>
</dbReference>
<dbReference type="Pfam" id="PF01715">
    <property type="entry name" value="IPPT"/>
    <property type="match status" value="1"/>
</dbReference>
<dbReference type="SUPFAM" id="SSF52540">
    <property type="entry name" value="P-loop containing nucleoside triphosphate hydrolases"/>
    <property type="match status" value="1"/>
</dbReference>
<feature type="chain" id="PRO_0000377145" description="tRNA dimethylallyltransferase">
    <location>
        <begin position="1"/>
        <end position="283"/>
    </location>
</feature>
<feature type="region of interest" description="Interaction with substrate tRNA" evidence="1">
    <location>
        <begin position="5"/>
        <end position="8"/>
    </location>
</feature>
<feature type="site" description="Interaction with substrate tRNA" evidence="1">
    <location>
        <position position="71"/>
    </location>
</feature>
<feature type="site" description="Interaction with substrate tRNA" evidence="1">
    <location>
        <position position="94"/>
    </location>
</feature>
<gene>
    <name evidence="1" type="primary">miaA</name>
    <name type="ordered locus">Dred_1882</name>
</gene>
<keyword id="KW-0067">ATP-binding</keyword>
<keyword id="KW-0460">Magnesium</keyword>
<keyword id="KW-0547">Nucleotide-binding</keyword>
<keyword id="KW-1185">Reference proteome</keyword>
<keyword id="KW-0808">Transferase</keyword>
<keyword id="KW-0819">tRNA processing</keyword>
<name>MIAA_DESRM</name>
<evidence type="ECO:0000255" key="1">
    <source>
        <dbReference type="HAMAP-Rule" id="MF_00185"/>
    </source>
</evidence>
<protein>
    <recommendedName>
        <fullName evidence="1">tRNA dimethylallyltransferase</fullName>
        <ecNumber evidence="1">2.5.1.75</ecNumber>
    </recommendedName>
    <alternativeName>
        <fullName evidence="1">Dimethylallyl diphosphate:tRNA dimethylallyltransferase</fullName>
        <shortName evidence="1">DMAPP:tRNA dimethylallyltransferase</shortName>
        <shortName evidence="1">DMATase</shortName>
    </alternativeName>
    <alternativeName>
        <fullName evidence="1">Isopentenyl-diphosphate:tRNA isopentenyltransferase</fullName>
        <shortName evidence="1">IPP transferase</shortName>
        <shortName evidence="1">IPPT</shortName>
        <shortName evidence="1">IPTase</shortName>
    </alternativeName>
</protein>
<accession>A4J5Q1</accession>
<sequence>MISADSMLVYRDMDIGTAKPTLEEMAGIPHHMIDIVNPNEEFSVATYQSRVEELINQIIDRGNLPLLVGGTGLYIRSVIDHYDFTTAPKDDRLRECLKREAEQVGAAAMHKKLSEVDPQSAERLHPNDLRRVIRALEVYYQTGKTIAEYQYKDQVEKPKYNLKMFGLTMDRQLLYQRIEQRVDLMMARGLLTEVKELVEQYNGLGTALQGLGYKEIIGYLKGEYSLPEAVEILKRNTRRFAKRQLTWFRADNRIFWIEMDRFENKKAVANEIMKQMAGDFLTL</sequence>
<proteinExistence type="inferred from homology"/>
<comment type="function">
    <text evidence="1">Catalyzes the transfer of a dimethylallyl group onto the adenine at position 37 in tRNAs that read codons beginning with uridine, leading to the formation of N6-(dimethylallyl)adenosine (i(6)A).</text>
</comment>
<comment type="catalytic activity">
    <reaction evidence="1">
        <text>adenosine(37) in tRNA + dimethylallyl diphosphate = N(6)-dimethylallyladenosine(37) in tRNA + diphosphate</text>
        <dbReference type="Rhea" id="RHEA:26482"/>
        <dbReference type="Rhea" id="RHEA-COMP:10162"/>
        <dbReference type="Rhea" id="RHEA-COMP:10375"/>
        <dbReference type="ChEBI" id="CHEBI:33019"/>
        <dbReference type="ChEBI" id="CHEBI:57623"/>
        <dbReference type="ChEBI" id="CHEBI:74411"/>
        <dbReference type="ChEBI" id="CHEBI:74415"/>
        <dbReference type="EC" id="2.5.1.75"/>
    </reaction>
</comment>
<comment type="cofactor">
    <cofactor evidence="1">
        <name>Mg(2+)</name>
        <dbReference type="ChEBI" id="CHEBI:18420"/>
    </cofactor>
</comment>
<comment type="subunit">
    <text evidence="1">Monomer.</text>
</comment>
<comment type="similarity">
    <text evidence="1">Belongs to the IPP transferase family.</text>
</comment>
<reference key="1">
    <citation type="submission" date="2007-03" db="EMBL/GenBank/DDBJ databases">
        <title>Complete sequence of Desulfotomaculum reducens MI-1.</title>
        <authorList>
            <consortium name="US DOE Joint Genome Institute"/>
            <person name="Copeland A."/>
            <person name="Lucas S."/>
            <person name="Lapidus A."/>
            <person name="Barry K."/>
            <person name="Detter J.C."/>
            <person name="Glavina del Rio T."/>
            <person name="Hammon N."/>
            <person name="Israni S."/>
            <person name="Dalin E."/>
            <person name="Tice H."/>
            <person name="Pitluck S."/>
            <person name="Sims D."/>
            <person name="Brettin T."/>
            <person name="Bruce D."/>
            <person name="Han C."/>
            <person name="Tapia R."/>
            <person name="Schmutz J."/>
            <person name="Larimer F."/>
            <person name="Land M."/>
            <person name="Hauser L."/>
            <person name="Kyrpides N."/>
            <person name="Kim E."/>
            <person name="Tebo B.M."/>
            <person name="Richardson P."/>
        </authorList>
    </citation>
    <scope>NUCLEOTIDE SEQUENCE [LARGE SCALE GENOMIC DNA]</scope>
    <source>
        <strain>ATCC BAA-1160 / DSM 100696 / MI-1</strain>
    </source>
</reference>
<organism>
    <name type="scientific">Desulforamulus reducens (strain ATCC BAA-1160 / DSM 100696 / MI-1)</name>
    <name type="common">Desulfotomaculum reducens</name>
    <dbReference type="NCBI Taxonomy" id="349161"/>
    <lineage>
        <taxon>Bacteria</taxon>
        <taxon>Bacillati</taxon>
        <taxon>Bacillota</taxon>
        <taxon>Clostridia</taxon>
        <taxon>Eubacteriales</taxon>
        <taxon>Peptococcaceae</taxon>
        <taxon>Desulforamulus</taxon>
    </lineage>
</organism>